<sequence>MTKSAELFAKAQEKIPGGVNSPVRAFAGVGGSPIFIERADGPLIFDADGKAYIDYVGSWGPMILGHNHAAIREAVISAAQRGLSFGAPTETEINMAELVSELVPSMEQVRMVSSGTEATMSAIRLARGYTGRDKIMKFEGCYHGHADSLLVKAGSGALTLGQPSSPGVPADFAKYTLTATFNNLDSVRELFAANKGEISCIIVEPVAGNMNCIPPVEGFHEGLREICDAEGALLIFDEVMTGFRVAENCAQGYYNIKPDLTCLGKVIGGGMPVGAFGGRKDIMQYIAPTGPVYQAGTLSGNPVAMAAGFACLKVLTEEGNEKRLATTTKQLALGFKELANKHGLPMVVNYVGGMFGFFFTDQETITTYEDVTKCDIERFKRFFNLMLAHGVYLAPSAFEAGFTSLAHGPKEIEATLEAADRCFAKIAAESK</sequence>
<feature type="chain" id="PRO_1000121855" description="Glutamate-1-semialdehyde 2,1-aminomutase">
    <location>
        <begin position="1"/>
        <end position="431"/>
    </location>
</feature>
<feature type="modified residue" description="N6-(pyridoxal phosphate)lysine" evidence="1">
    <location>
        <position position="265"/>
    </location>
</feature>
<reference key="1">
    <citation type="journal article" date="2008" name="BMC Genomics">
        <title>The genome sequence of the fish pathogen Aliivibrio salmonicida strain LFI1238 shows extensive evidence of gene decay.</title>
        <authorList>
            <person name="Hjerde E."/>
            <person name="Lorentzen M.S."/>
            <person name="Holden M.T."/>
            <person name="Seeger K."/>
            <person name="Paulsen S."/>
            <person name="Bason N."/>
            <person name="Churcher C."/>
            <person name="Harris D."/>
            <person name="Norbertczak H."/>
            <person name="Quail M.A."/>
            <person name="Sanders S."/>
            <person name="Thurston S."/>
            <person name="Parkhill J."/>
            <person name="Willassen N.P."/>
            <person name="Thomson N.R."/>
        </authorList>
    </citation>
    <scope>NUCLEOTIDE SEQUENCE [LARGE SCALE GENOMIC DNA]</scope>
    <source>
        <strain>LFI1238</strain>
    </source>
</reference>
<proteinExistence type="inferred from homology"/>
<name>GSA_ALISL</name>
<organism>
    <name type="scientific">Aliivibrio salmonicida (strain LFI1238)</name>
    <name type="common">Vibrio salmonicida (strain LFI1238)</name>
    <dbReference type="NCBI Taxonomy" id="316275"/>
    <lineage>
        <taxon>Bacteria</taxon>
        <taxon>Pseudomonadati</taxon>
        <taxon>Pseudomonadota</taxon>
        <taxon>Gammaproteobacteria</taxon>
        <taxon>Vibrionales</taxon>
        <taxon>Vibrionaceae</taxon>
        <taxon>Aliivibrio</taxon>
    </lineage>
</organism>
<keyword id="KW-0963">Cytoplasm</keyword>
<keyword id="KW-0413">Isomerase</keyword>
<keyword id="KW-0627">Porphyrin biosynthesis</keyword>
<keyword id="KW-0663">Pyridoxal phosphate</keyword>
<protein>
    <recommendedName>
        <fullName evidence="1">Glutamate-1-semialdehyde 2,1-aminomutase</fullName>
        <shortName evidence="1">GSA</shortName>
        <ecNumber evidence="1">5.4.3.8</ecNumber>
    </recommendedName>
    <alternativeName>
        <fullName evidence="1">Glutamate-1-semialdehyde aminotransferase</fullName>
        <shortName evidence="1">GSA-AT</shortName>
    </alternativeName>
</protein>
<evidence type="ECO:0000255" key="1">
    <source>
        <dbReference type="HAMAP-Rule" id="MF_00375"/>
    </source>
</evidence>
<dbReference type="EC" id="5.4.3.8" evidence="1"/>
<dbReference type="EMBL" id="FM178379">
    <property type="protein sequence ID" value="CAQ80256.1"/>
    <property type="molecule type" value="Genomic_DNA"/>
</dbReference>
<dbReference type="RefSeq" id="WP_012551042.1">
    <property type="nucleotide sequence ID" value="NC_011312.1"/>
</dbReference>
<dbReference type="SMR" id="B6EL04"/>
<dbReference type="KEGG" id="vsa:VSAL_I2572"/>
<dbReference type="eggNOG" id="COG0001">
    <property type="taxonomic scope" value="Bacteria"/>
</dbReference>
<dbReference type="HOGENOM" id="CLU_016922_1_5_6"/>
<dbReference type="UniPathway" id="UPA00251">
    <property type="reaction ID" value="UER00317"/>
</dbReference>
<dbReference type="Proteomes" id="UP000001730">
    <property type="component" value="Chromosome 1"/>
</dbReference>
<dbReference type="GO" id="GO:0005737">
    <property type="term" value="C:cytoplasm"/>
    <property type="evidence" value="ECO:0007669"/>
    <property type="project" value="UniProtKB-SubCell"/>
</dbReference>
<dbReference type="GO" id="GO:0042286">
    <property type="term" value="F:glutamate-1-semialdehyde 2,1-aminomutase activity"/>
    <property type="evidence" value="ECO:0007669"/>
    <property type="project" value="UniProtKB-UniRule"/>
</dbReference>
<dbReference type="GO" id="GO:0030170">
    <property type="term" value="F:pyridoxal phosphate binding"/>
    <property type="evidence" value="ECO:0007669"/>
    <property type="project" value="InterPro"/>
</dbReference>
<dbReference type="GO" id="GO:0008483">
    <property type="term" value="F:transaminase activity"/>
    <property type="evidence" value="ECO:0007669"/>
    <property type="project" value="InterPro"/>
</dbReference>
<dbReference type="GO" id="GO:0006782">
    <property type="term" value="P:protoporphyrinogen IX biosynthetic process"/>
    <property type="evidence" value="ECO:0007669"/>
    <property type="project" value="UniProtKB-UniRule"/>
</dbReference>
<dbReference type="CDD" id="cd00610">
    <property type="entry name" value="OAT_like"/>
    <property type="match status" value="1"/>
</dbReference>
<dbReference type="FunFam" id="3.40.640.10:FF:000021">
    <property type="entry name" value="Glutamate-1-semialdehyde 2,1-aminomutase"/>
    <property type="match status" value="1"/>
</dbReference>
<dbReference type="FunFam" id="3.90.1150.10:FF:000012">
    <property type="entry name" value="Glutamate-1-semialdehyde 2,1-aminomutase"/>
    <property type="match status" value="1"/>
</dbReference>
<dbReference type="Gene3D" id="3.90.1150.10">
    <property type="entry name" value="Aspartate Aminotransferase, domain 1"/>
    <property type="match status" value="1"/>
</dbReference>
<dbReference type="Gene3D" id="3.40.640.10">
    <property type="entry name" value="Type I PLP-dependent aspartate aminotransferase-like (Major domain)"/>
    <property type="match status" value="1"/>
</dbReference>
<dbReference type="HAMAP" id="MF_00375">
    <property type="entry name" value="HemL_aminotrans_3"/>
    <property type="match status" value="1"/>
</dbReference>
<dbReference type="InterPro" id="IPR004639">
    <property type="entry name" value="4pyrrol_synth_GluAld_NH2Trfase"/>
</dbReference>
<dbReference type="InterPro" id="IPR005814">
    <property type="entry name" value="Aminotrans_3"/>
</dbReference>
<dbReference type="InterPro" id="IPR049704">
    <property type="entry name" value="Aminotrans_3_PPA_site"/>
</dbReference>
<dbReference type="InterPro" id="IPR015424">
    <property type="entry name" value="PyrdxlP-dep_Trfase"/>
</dbReference>
<dbReference type="InterPro" id="IPR015421">
    <property type="entry name" value="PyrdxlP-dep_Trfase_major"/>
</dbReference>
<dbReference type="InterPro" id="IPR015422">
    <property type="entry name" value="PyrdxlP-dep_Trfase_small"/>
</dbReference>
<dbReference type="NCBIfam" id="TIGR00713">
    <property type="entry name" value="hemL"/>
    <property type="match status" value="1"/>
</dbReference>
<dbReference type="NCBIfam" id="NF000818">
    <property type="entry name" value="PRK00062.1"/>
    <property type="match status" value="1"/>
</dbReference>
<dbReference type="PANTHER" id="PTHR43713">
    <property type="entry name" value="GLUTAMATE-1-SEMIALDEHYDE 2,1-AMINOMUTASE"/>
    <property type="match status" value="1"/>
</dbReference>
<dbReference type="PANTHER" id="PTHR43713:SF3">
    <property type="entry name" value="GLUTAMATE-1-SEMIALDEHYDE 2,1-AMINOMUTASE 1, CHLOROPLASTIC-RELATED"/>
    <property type="match status" value="1"/>
</dbReference>
<dbReference type="Pfam" id="PF00202">
    <property type="entry name" value="Aminotran_3"/>
    <property type="match status" value="1"/>
</dbReference>
<dbReference type="SUPFAM" id="SSF53383">
    <property type="entry name" value="PLP-dependent transferases"/>
    <property type="match status" value="1"/>
</dbReference>
<dbReference type="PROSITE" id="PS00600">
    <property type="entry name" value="AA_TRANSFER_CLASS_3"/>
    <property type="match status" value="1"/>
</dbReference>
<gene>
    <name evidence="1" type="primary">hemL</name>
    <name type="ordered locus">VSAL_I2572</name>
</gene>
<accession>B6EL04</accession>
<comment type="catalytic activity">
    <reaction evidence="1">
        <text>(S)-4-amino-5-oxopentanoate = 5-aminolevulinate</text>
        <dbReference type="Rhea" id="RHEA:14265"/>
        <dbReference type="ChEBI" id="CHEBI:57501"/>
        <dbReference type="ChEBI" id="CHEBI:356416"/>
        <dbReference type="EC" id="5.4.3.8"/>
    </reaction>
</comment>
<comment type="cofactor">
    <cofactor evidence="1">
        <name>pyridoxal 5'-phosphate</name>
        <dbReference type="ChEBI" id="CHEBI:597326"/>
    </cofactor>
</comment>
<comment type="pathway">
    <text evidence="1">Porphyrin-containing compound metabolism; protoporphyrin-IX biosynthesis; 5-aminolevulinate from L-glutamyl-tRNA(Glu): step 2/2.</text>
</comment>
<comment type="subunit">
    <text evidence="1">Homodimer.</text>
</comment>
<comment type="subcellular location">
    <subcellularLocation>
        <location evidence="1">Cytoplasm</location>
    </subcellularLocation>
</comment>
<comment type="similarity">
    <text evidence="1">Belongs to the class-III pyridoxal-phosphate-dependent aminotransferase family. HemL subfamily.</text>
</comment>